<gene>
    <name evidence="1" type="primary">glyQ</name>
    <name type="ordered locus">Syncc9605_0812</name>
</gene>
<dbReference type="EC" id="6.1.1.14" evidence="1"/>
<dbReference type="EMBL" id="CP000110">
    <property type="protein sequence ID" value="ABB34580.1"/>
    <property type="molecule type" value="Genomic_DNA"/>
</dbReference>
<dbReference type="RefSeq" id="WP_011363805.1">
    <property type="nucleotide sequence ID" value="NC_007516.1"/>
</dbReference>
<dbReference type="SMR" id="Q3ALF2"/>
<dbReference type="STRING" id="110662.Syncc9605_0812"/>
<dbReference type="KEGG" id="syd:Syncc9605_0812"/>
<dbReference type="eggNOG" id="COG0752">
    <property type="taxonomic scope" value="Bacteria"/>
</dbReference>
<dbReference type="HOGENOM" id="CLU_057066_1_0_3"/>
<dbReference type="OrthoDB" id="9802183at2"/>
<dbReference type="GO" id="GO:0005829">
    <property type="term" value="C:cytosol"/>
    <property type="evidence" value="ECO:0007669"/>
    <property type="project" value="TreeGrafter"/>
</dbReference>
<dbReference type="GO" id="GO:0005524">
    <property type="term" value="F:ATP binding"/>
    <property type="evidence" value="ECO:0007669"/>
    <property type="project" value="UniProtKB-UniRule"/>
</dbReference>
<dbReference type="GO" id="GO:0004820">
    <property type="term" value="F:glycine-tRNA ligase activity"/>
    <property type="evidence" value="ECO:0007669"/>
    <property type="project" value="UniProtKB-UniRule"/>
</dbReference>
<dbReference type="GO" id="GO:0006426">
    <property type="term" value="P:glycyl-tRNA aminoacylation"/>
    <property type="evidence" value="ECO:0007669"/>
    <property type="project" value="UniProtKB-UniRule"/>
</dbReference>
<dbReference type="CDD" id="cd00733">
    <property type="entry name" value="GlyRS_alpha_core"/>
    <property type="match status" value="1"/>
</dbReference>
<dbReference type="FunFam" id="3.30.930.10:FF:000006">
    <property type="entry name" value="Glycine--tRNA ligase alpha subunit"/>
    <property type="match status" value="1"/>
</dbReference>
<dbReference type="Gene3D" id="3.30.930.10">
    <property type="entry name" value="Bira Bifunctional Protein, Domain 2"/>
    <property type="match status" value="1"/>
</dbReference>
<dbReference type="Gene3D" id="1.20.58.180">
    <property type="entry name" value="Class II aaRS and biotin synthetases, domain 2"/>
    <property type="match status" value="1"/>
</dbReference>
<dbReference type="HAMAP" id="MF_00254">
    <property type="entry name" value="Gly_tRNA_synth_alpha"/>
    <property type="match status" value="1"/>
</dbReference>
<dbReference type="InterPro" id="IPR045864">
    <property type="entry name" value="aa-tRNA-synth_II/BPL/LPL"/>
</dbReference>
<dbReference type="InterPro" id="IPR006194">
    <property type="entry name" value="Gly-tRNA-synth_heterodimer"/>
</dbReference>
<dbReference type="InterPro" id="IPR002310">
    <property type="entry name" value="Gly-tRNA_ligase_asu"/>
</dbReference>
<dbReference type="NCBIfam" id="TIGR00388">
    <property type="entry name" value="glyQ"/>
    <property type="match status" value="1"/>
</dbReference>
<dbReference type="NCBIfam" id="NF006827">
    <property type="entry name" value="PRK09348.1"/>
    <property type="match status" value="1"/>
</dbReference>
<dbReference type="PANTHER" id="PTHR30075:SF2">
    <property type="entry name" value="GLYCINE--TRNA LIGASE, CHLOROPLASTIC_MITOCHONDRIAL 2"/>
    <property type="match status" value="1"/>
</dbReference>
<dbReference type="PANTHER" id="PTHR30075">
    <property type="entry name" value="GLYCYL-TRNA SYNTHETASE"/>
    <property type="match status" value="1"/>
</dbReference>
<dbReference type="Pfam" id="PF02091">
    <property type="entry name" value="tRNA-synt_2e"/>
    <property type="match status" value="1"/>
</dbReference>
<dbReference type="PRINTS" id="PR01044">
    <property type="entry name" value="TRNASYNTHGA"/>
</dbReference>
<dbReference type="SUPFAM" id="SSF55681">
    <property type="entry name" value="Class II aaRS and biotin synthetases"/>
    <property type="match status" value="1"/>
</dbReference>
<dbReference type="PROSITE" id="PS50861">
    <property type="entry name" value="AA_TRNA_LIGASE_II_GLYAB"/>
    <property type="match status" value="1"/>
</dbReference>
<evidence type="ECO:0000255" key="1">
    <source>
        <dbReference type="HAMAP-Rule" id="MF_00254"/>
    </source>
</evidence>
<comment type="catalytic activity">
    <reaction evidence="1">
        <text>tRNA(Gly) + glycine + ATP = glycyl-tRNA(Gly) + AMP + diphosphate</text>
        <dbReference type="Rhea" id="RHEA:16013"/>
        <dbReference type="Rhea" id="RHEA-COMP:9664"/>
        <dbReference type="Rhea" id="RHEA-COMP:9683"/>
        <dbReference type="ChEBI" id="CHEBI:30616"/>
        <dbReference type="ChEBI" id="CHEBI:33019"/>
        <dbReference type="ChEBI" id="CHEBI:57305"/>
        <dbReference type="ChEBI" id="CHEBI:78442"/>
        <dbReference type="ChEBI" id="CHEBI:78522"/>
        <dbReference type="ChEBI" id="CHEBI:456215"/>
        <dbReference type="EC" id="6.1.1.14"/>
    </reaction>
</comment>
<comment type="subunit">
    <text evidence="1">Tetramer of two alpha and two beta subunits.</text>
</comment>
<comment type="subcellular location">
    <subcellularLocation>
        <location evidence="1">Cytoplasm</location>
    </subcellularLocation>
</comment>
<comment type="similarity">
    <text evidence="1">Belongs to the class-II aminoacyl-tRNA synthetase family.</text>
</comment>
<sequence length="296" mass="33561">MYFQDIISTLNRFWADQGCLLLQPYDTEKGAGTMSPHTVLRAIGPEPWAVAYPEPCRRPTDGRYGDNPNRAQHYFQYQVLIKPSPDGIQETYLASLEALGIKAADHDIRFVEDNWESPTLGAWGVGWEVWLDGMEVTQFTYFQQCGGIDCKPVSIEITYGLERLAMYLQDVESIWDLSWNSERSYGEIWLPFEKGQCHFNFEASNPERLKQLFAIYEAEAADLIEKQLPAPALDFVLKCSHTFNLLEARGVISVTERTATIVRIRNLARKVAEAWLAEREALGFPLLKGGTLETAA</sequence>
<name>SYGA_SYNSC</name>
<proteinExistence type="inferred from homology"/>
<keyword id="KW-0030">Aminoacyl-tRNA synthetase</keyword>
<keyword id="KW-0067">ATP-binding</keyword>
<keyword id="KW-0963">Cytoplasm</keyword>
<keyword id="KW-0436">Ligase</keyword>
<keyword id="KW-0547">Nucleotide-binding</keyword>
<keyword id="KW-0648">Protein biosynthesis</keyword>
<organism>
    <name type="scientific">Synechococcus sp. (strain CC9605)</name>
    <dbReference type="NCBI Taxonomy" id="110662"/>
    <lineage>
        <taxon>Bacteria</taxon>
        <taxon>Bacillati</taxon>
        <taxon>Cyanobacteriota</taxon>
        <taxon>Cyanophyceae</taxon>
        <taxon>Synechococcales</taxon>
        <taxon>Synechococcaceae</taxon>
        <taxon>Synechococcus</taxon>
    </lineage>
</organism>
<accession>Q3ALF2</accession>
<reference key="1">
    <citation type="submission" date="2005-07" db="EMBL/GenBank/DDBJ databases">
        <title>Complete sequence of Synechococcus sp. CC9605.</title>
        <authorList>
            <consortium name="US DOE Joint Genome Institute"/>
            <person name="Copeland A."/>
            <person name="Lucas S."/>
            <person name="Lapidus A."/>
            <person name="Barry K."/>
            <person name="Detter J.C."/>
            <person name="Glavina T."/>
            <person name="Hammon N."/>
            <person name="Israni S."/>
            <person name="Pitluck S."/>
            <person name="Schmutz J."/>
            <person name="Martinez M."/>
            <person name="Larimer F."/>
            <person name="Land M."/>
            <person name="Kyrpides N."/>
            <person name="Ivanova N."/>
            <person name="Richardson P."/>
        </authorList>
    </citation>
    <scope>NUCLEOTIDE SEQUENCE [LARGE SCALE GENOMIC DNA]</scope>
    <source>
        <strain>CC9605</strain>
    </source>
</reference>
<feature type="chain" id="PRO_1000047520" description="Glycine--tRNA ligase alpha subunit">
    <location>
        <begin position="1"/>
        <end position="296"/>
    </location>
</feature>
<protein>
    <recommendedName>
        <fullName evidence="1">Glycine--tRNA ligase alpha subunit</fullName>
        <ecNumber evidence="1">6.1.1.14</ecNumber>
    </recommendedName>
    <alternativeName>
        <fullName evidence="1">Glycyl-tRNA synthetase alpha subunit</fullName>
        <shortName evidence="1">GlyRS</shortName>
    </alternativeName>
</protein>